<feature type="chain" id="PRO_0000315192" description="UDP-N-acetylglucosamine--N-acetylmuramyl-(pentapeptide) pyrophosphoryl-undecaprenol N-acetylglucosamine transferase">
    <location>
        <begin position="1"/>
        <end position="358"/>
    </location>
</feature>
<feature type="binding site" evidence="1">
    <location>
        <begin position="11"/>
        <end position="13"/>
    </location>
    <ligand>
        <name>UDP-N-acetyl-alpha-D-glucosamine</name>
        <dbReference type="ChEBI" id="CHEBI:57705"/>
    </ligand>
</feature>
<feature type="binding site" evidence="1">
    <location>
        <position position="120"/>
    </location>
    <ligand>
        <name>UDP-N-acetyl-alpha-D-glucosamine</name>
        <dbReference type="ChEBI" id="CHEBI:57705"/>
    </ligand>
</feature>
<feature type="binding site" evidence="1">
    <location>
        <position position="161"/>
    </location>
    <ligand>
        <name>UDP-N-acetyl-alpha-D-glucosamine</name>
        <dbReference type="ChEBI" id="CHEBI:57705"/>
    </ligand>
</feature>
<feature type="binding site" evidence="1">
    <location>
        <position position="188"/>
    </location>
    <ligand>
        <name>UDP-N-acetyl-alpha-D-glucosamine</name>
        <dbReference type="ChEBI" id="CHEBI:57705"/>
    </ligand>
</feature>
<feature type="binding site" evidence="1">
    <location>
        <position position="282"/>
    </location>
    <ligand>
        <name>UDP-N-acetyl-alpha-D-glucosamine</name>
        <dbReference type="ChEBI" id="CHEBI:57705"/>
    </ligand>
</feature>
<proteinExistence type="inferred from homology"/>
<gene>
    <name evidence="1" type="primary">murG</name>
    <name type="ordered locus">SynWH7803_2361</name>
</gene>
<accession>A5GPC2</accession>
<protein>
    <recommendedName>
        <fullName evidence="1">UDP-N-acetylglucosamine--N-acetylmuramyl-(pentapeptide) pyrophosphoryl-undecaprenol N-acetylglucosamine transferase</fullName>
        <ecNumber evidence="1">2.4.1.227</ecNumber>
    </recommendedName>
    <alternativeName>
        <fullName evidence="1">Undecaprenyl-PP-MurNAc-pentapeptide-UDPGlcNAc GlcNAc transferase</fullName>
    </alternativeName>
</protein>
<name>MURG_SYNPW</name>
<reference key="1">
    <citation type="submission" date="2006-05" db="EMBL/GenBank/DDBJ databases">
        <authorList>
            <consortium name="Genoscope"/>
        </authorList>
    </citation>
    <scope>NUCLEOTIDE SEQUENCE [LARGE SCALE GENOMIC DNA]</scope>
    <source>
        <strain>WH7803</strain>
    </source>
</reference>
<sequence length="358" mass="37422">MPRLLIAASGTGGHLFPALSVADALPAGWSAHWLGVPDRLETTLVPERYPLTTVNAGGLQGRGLKKVVQLLRLLAASRDVRRLIRRNGIDVVFTTGGYIAAPAILGARWSGVPVVLHESNAIPGRVTRLLGRACTQVAIGLPAAARRIPGCKAIVTGTPVRNSFLQTQTLPDWVPQGPGPLLVVMGGSQGALGLNRMVRPLLPMLLSEGCRVVHLTGSNDPDVNSIKHPGFAERPFSDAIPALLQHADLAISRAGAGSLSELAVSGTPTVLVPFPQAADRHQDANAACAAALGAAVIVHQHGPSEPTLRQTLWRLLGPRLRSCDSAADPLVSMAQAMGTLAEADADQQLAALLQGLVR</sequence>
<keyword id="KW-0131">Cell cycle</keyword>
<keyword id="KW-0132">Cell division</keyword>
<keyword id="KW-0997">Cell inner membrane</keyword>
<keyword id="KW-1003">Cell membrane</keyword>
<keyword id="KW-0133">Cell shape</keyword>
<keyword id="KW-0961">Cell wall biogenesis/degradation</keyword>
<keyword id="KW-0328">Glycosyltransferase</keyword>
<keyword id="KW-0472">Membrane</keyword>
<keyword id="KW-0573">Peptidoglycan synthesis</keyword>
<keyword id="KW-1185">Reference proteome</keyword>
<keyword id="KW-0808">Transferase</keyword>
<evidence type="ECO:0000255" key="1">
    <source>
        <dbReference type="HAMAP-Rule" id="MF_00033"/>
    </source>
</evidence>
<comment type="function">
    <text evidence="1">Cell wall formation. Catalyzes the transfer of a GlcNAc subunit on undecaprenyl-pyrophosphoryl-MurNAc-pentapeptide (lipid intermediate I) to form undecaprenyl-pyrophosphoryl-MurNAc-(pentapeptide)GlcNAc (lipid intermediate II).</text>
</comment>
<comment type="catalytic activity">
    <reaction evidence="1">
        <text>di-trans,octa-cis-undecaprenyl diphospho-N-acetyl-alpha-D-muramoyl-L-alanyl-D-glutamyl-meso-2,6-diaminopimeloyl-D-alanyl-D-alanine + UDP-N-acetyl-alpha-D-glucosamine = di-trans,octa-cis-undecaprenyl diphospho-[N-acetyl-alpha-D-glucosaminyl-(1-&gt;4)]-N-acetyl-alpha-D-muramoyl-L-alanyl-D-glutamyl-meso-2,6-diaminopimeloyl-D-alanyl-D-alanine + UDP + H(+)</text>
        <dbReference type="Rhea" id="RHEA:31227"/>
        <dbReference type="ChEBI" id="CHEBI:15378"/>
        <dbReference type="ChEBI" id="CHEBI:57705"/>
        <dbReference type="ChEBI" id="CHEBI:58223"/>
        <dbReference type="ChEBI" id="CHEBI:61387"/>
        <dbReference type="ChEBI" id="CHEBI:61388"/>
        <dbReference type="EC" id="2.4.1.227"/>
    </reaction>
</comment>
<comment type="pathway">
    <text evidence="1">Cell wall biogenesis; peptidoglycan biosynthesis.</text>
</comment>
<comment type="subcellular location">
    <subcellularLocation>
        <location evidence="1">Cell inner membrane</location>
        <topology evidence="1">Peripheral membrane protein</topology>
        <orientation evidence="1">Cytoplasmic side</orientation>
    </subcellularLocation>
</comment>
<comment type="similarity">
    <text evidence="1">Belongs to the glycosyltransferase 28 family. MurG subfamily.</text>
</comment>
<dbReference type="EC" id="2.4.1.227" evidence="1"/>
<dbReference type="EMBL" id="CT971583">
    <property type="protein sequence ID" value="CAK24787.1"/>
    <property type="molecule type" value="Genomic_DNA"/>
</dbReference>
<dbReference type="SMR" id="A5GPC2"/>
<dbReference type="STRING" id="32051.SynWH7803_2361"/>
<dbReference type="CAZy" id="GT28">
    <property type="family name" value="Glycosyltransferase Family 28"/>
</dbReference>
<dbReference type="KEGG" id="syx:SynWH7803_2361"/>
<dbReference type="eggNOG" id="COG0707">
    <property type="taxonomic scope" value="Bacteria"/>
</dbReference>
<dbReference type="HOGENOM" id="CLU_037404_1_0_3"/>
<dbReference type="OrthoDB" id="9808936at2"/>
<dbReference type="UniPathway" id="UPA00219"/>
<dbReference type="Proteomes" id="UP000001566">
    <property type="component" value="Chromosome"/>
</dbReference>
<dbReference type="GO" id="GO:0005886">
    <property type="term" value="C:plasma membrane"/>
    <property type="evidence" value="ECO:0007669"/>
    <property type="project" value="UniProtKB-SubCell"/>
</dbReference>
<dbReference type="GO" id="GO:0051991">
    <property type="term" value="F:UDP-N-acetyl-D-glucosamine:N-acetylmuramoyl-L-alanyl-D-glutamyl-meso-2,6-diaminopimelyl-D-alanyl-D-alanine-diphosphoundecaprenol 4-beta-N-acetylglucosaminlytransferase activity"/>
    <property type="evidence" value="ECO:0007669"/>
    <property type="project" value="RHEA"/>
</dbReference>
<dbReference type="GO" id="GO:0050511">
    <property type="term" value="F:undecaprenyldiphospho-muramoylpentapeptide beta-N-acetylglucosaminyltransferase activity"/>
    <property type="evidence" value="ECO:0007669"/>
    <property type="project" value="UniProtKB-UniRule"/>
</dbReference>
<dbReference type="GO" id="GO:0005975">
    <property type="term" value="P:carbohydrate metabolic process"/>
    <property type="evidence" value="ECO:0007669"/>
    <property type="project" value="InterPro"/>
</dbReference>
<dbReference type="GO" id="GO:0051301">
    <property type="term" value="P:cell division"/>
    <property type="evidence" value="ECO:0007669"/>
    <property type="project" value="UniProtKB-KW"/>
</dbReference>
<dbReference type="GO" id="GO:0071555">
    <property type="term" value="P:cell wall organization"/>
    <property type="evidence" value="ECO:0007669"/>
    <property type="project" value="UniProtKB-KW"/>
</dbReference>
<dbReference type="GO" id="GO:0030259">
    <property type="term" value="P:lipid glycosylation"/>
    <property type="evidence" value="ECO:0007669"/>
    <property type="project" value="UniProtKB-UniRule"/>
</dbReference>
<dbReference type="GO" id="GO:0009252">
    <property type="term" value="P:peptidoglycan biosynthetic process"/>
    <property type="evidence" value="ECO:0007669"/>
    <property type="project" value="UniProtKB-UniRule"/>
</dbReference>
<dbReference type="GO" id="GO:0008360">
    <property type="term" value="P:regulation of cell shape"/>
    <property type="evidence" value="ECO:0007669"/>
    <property type="project" value="UniProtKB-KW"/>
</dbReference>
<dbReference type="CDD" id="cd03785">
    <property type="entry name" value="GT28_MurG"/>
    <property type="match status" value="1"/>
</dbReference>
<dbReference type="Gene3D" id="3.40.50.2000">
    <property type="entry name" value="Glycogen Phosphorylase B"/>
    <property type="match status" value="2"/>
</dbReference>
<dbReference type="HAMAP" id="MF_00033">
    <property type="entry name" value="MurG"/>
    <property type="match status" value="1"/>
</dbReference>
<dbReference type="InterPro" id="IPR006009">
    <property type="entry name" value="GlcNAc_MurG"/>
</dbReference>
<dbReference type="InterPro" id="IPR007235">
    <property type="entry name" value="Glyco_trans_28_C"/>
</dbReference>
<dbReference type="InterPro" id="IPR004276">
    <property type="entry name" value="GlycoTrans_28_N"/>
</dbReference>
<dbReference type="PANTHER" id="PTHR21015:SF22">
    <property type="entry name" value="GLYCOSYLTRANSFERASE"/>
    <property type="match status" value="1"/>
</dbReference>
<dbReference type="PANTHER" id="PTHR21015">
    <property type="entry name" value="UDP-N-ACETYLGLUCOSAMINE--N-ACETYLMURAMYL-(PENTAPEPTIDE) PYROPHOSPHORYL-UNDECAPRENOL N-ACETYLGLUCOSAMINE TRANSFERASE 1"/>
    <property type="match status" value="1"/>
</dbReference>
<dbReference type="Pfam" id="PF04101">
    <property type="entry name" value="Glyco_tran_28_C"/>
    <property type="match status" value="1"/>
</dbReference>
<dbReference type="Pfam" id="PF03033">
    <property type="entry name" value="Glyco_transf_28"/>
    <property type="match status" value="1"/>
</dbReference>
<dbReference type="SUPFAM" id="SSF53756">
    <property type="entry name" value="UDP-Glycosyltransferase/glycogen phosphorylase"/>
    <property type="match status" value="1"/>
</dbReference>
<organism>
    <name type="scientific">Synechococcus sp. (strain WH7803)</name>
    <dbReference type="NCBI Taxonomy" id="32051"/>
    <lineage>
        <taxon>Bacteria</taxon>
        <taxon>Bacillati</taxon>
        <taxon>Cyanobacteriota</taxon>
        <taxon>Cyanophyceae</taxon>
        <taxon>Synechococcales</taxon>
        <taxon>Synechococcaceae</taxon>
        <taxon>Synechococcus</taxon>
    </lineage>
</organism>